<feature type="chain" id="PRO_1000127151" description="Small ribosomal subunit protein uS10">
    <location>
        <begin position="1"/>
        <end position="102"/>
    </location>
</feature>
<evidence type="ECO:0000255" key="1">
    <source>
        <dbReference type="HAMAP-Rule" id="MF_00508"/>
    </source>
</evidence>
<evidence type="ECO:0000305" key="2"/>
<sequence>MNGQNIRIRLKAFDHRILDASTKEIVSTAKRTGATIRGPIPLPTHIAKFTVNRSPHIDKKSREQFEMRTHKRVLDIVDPTPQTVDALMKLDLAAGVDVEIKL</sequence>
<proteinExistence type="inferred from homology"/>
<gene>
    <name evidence="1" type="primary">rpsJ</name>
    <name type="ordered locus">Mrad2831_2217</name>
</gene>
<name>RS10_METRJ</name>
<accession>B1LWS5</accession>
<comment type="function">
    <text evidence="1">Involved in the binding of tRNA to the ribosomes.</text>
</comment>
<comment type="subunit">
    <text evidence="1">Part of the 30S ribosomal subunit.</text>
</comment>
<comment type="similarity">
    <text evidence="1">Belongs to the universal ribosomal protein uS10 family.</text>
</comment>
<protein>
    <recommendedName>
        <fullName evidence="1">Small ribosomal subunit protein uS10</fullName>
    </recommendedName>
    <alternativeName>
        <fullName evidence="2">30S ribosomal protein S10</fullName>
    </alternativeName>
</protein>
<organism>
    <name type="scientific">Methylobacterium radiotolerans (strain ATCC 27329 / DSM 1819 / JCM 2831 / NBRC 15690 / NCIMB 10815 / 0-1)</name>
    <dbReference type="NCBI Taxonomy" id="426355"/>
    <lineage>
        <taxon>Bacteria</taxon>
        <taxon>Pseudomonadati</taxon>
        <taxon>Pseudomonadota</taxon>
        <taxon>Alphaproteobacteria</taxon>
        <taxon>Hyphomicrobiales</taxon>
        <taxon>Methylobacteriaceae</taxon>
        <taxon>Methylobacterium</taxon>
    </lineage>
</organism>
<reference key="1">
    <citation type="submission" date="2008-03" db="EMBL/GenBank/DDBJ databases">
        <title>Complete sequence of chromosome of Methylobacterium radiotolerans JCM 2831.</title>
        <authorList>
            <consortium name="US DOE Joint Genome Institute"/>
            <person name="Copeland A."/>
            <person name="Lucas S."/>
            <person name="Lapidus A."/>
            <person name="Glavina del Rio T."/>
            <person name="Dalin E."/>
            <person name="Tice H."/>
            <person name="Bruce D."/>
            <person name="Goodwin L."/>
            <person name="Pitluck S."/>
            <person name="Kiss H."/>
            <person name="Brettin T."/>
            <person name="Detter J.C."/>
            <person name="Han C."/>
            <person name="Kuske C.R."/>
            <person name="Schmutz J."/>
            <person name="Larimer F."/>
            <person name="Land M."/>
            <person name="Hauser L."/>
            <person name="Kyrpides N."/>
            <person name="Mikhailova N."/>
            <person name="Marx C.J."/>
            <person name="Richardson P."/>
        </authorList>
    </citation>
    <scope>NUCLEOTIDE SEQUENCE [LARGE SCALE GENOMIC DNA]</scope>
    <source>
        <strain>ATCC 27329 / DSM 1819 / JCM 2831 / NBRC 15690 / NCIMB 10815 / 0-1</strain>
    </source>
</reference>
<keyword id="KW-0687">Ribonucleoprotein</keyword>
<keyword id="KW-0689">Ribosomal protein</keyword>
<dbReference type="EMBL" id="CP001001">
    <property type="protein sequence ID" value="ACB24212.1"/>
    <property type="molecule type" value="Genomic_DNA"/>
</dbReference>
<dbReference type="RefSeq" id="WP_007569268.1">
    <property type="nucleotide sequence ID" value="NC_010505.1"/>
</dbReference>
<dbReference type="SMR" id="B1LWS5"/>
<dbReference type="STRING" id="426355.Mrad2831_2217"/>
<dbReference type="GeneID" id="90833843"/>
<dbReference type="KEGG" id="mrd:Mrad2831_2217"/>
<dbReference type="eggNOG" id="COG0051">
    <property type="taxonomic scope" value="Bacteria"/>
</dbReference>
<dbReference type="HOGENOM" id="CLU_122625_1_3_5"/>
<dbReference type="OrthoDB" id="9804464at2"/>
<dbReference type="Proteomes" id="UP000006589">
    <property type="component" value="Chromosome"/>
</dbReference>
<dbReference type="GO" id="GO:1990904">
    <property type="term" value="C:ribonucleoprotein complex"/>
    <property type="evidence" value="ECO:0007669"/>
    <property type="project" value="UniProtKB-KW"/>
</dbReference>
<dbReference type="GO" id="GO:0005840">
    <property type="term" value="C:ribosome"/>
    <property type="evidence" value="ECO:0007669"/>
    <property type="project" value="UniProtKB-KW"/>
</dbReference>
<dbReference type="GO" id="GO:0003735">
    <property type="term" value="F:structural constituent of ribosome"/>
    <property type="evidence" value="ECO:0007669"/>
    <property type="project" value="InterPro"/>
</dbReference>
<dbReference type="GO" id="GO:0000049">
    <property type="term" value="F:tRNA binding"/>
    <property type="evidence" value="ECO:0007669"/>
    <property type="project" value="UniProtKB-UniRule"/>
</dbReference>
<dbReference type="GO" id="GO:0006412">
    <property type="term" value="P:translation"/>
    <property type="evidence" value="ECO:0007669"/>
    <property type="project" value="UniProtKB-UniRule"/>
</dbReference>
<dbReference type="FunFam" id="3.30.70.600:FF:000001">
    <property type="entry name" value="30S ribosomal protein S10"/>
    <property type="match status" value="1"/>
</dbReference>
<dbReference type="Gene3D" id="3.30.70.600">
    <property type="entry name" value="Ribosomal protein S10 domain"/>
    <property type="match status" value="1"/>
</dbReference>
<dbReference type="HAMAP" id="MF_00508">
    <property type="entry name" value="Ribosomal_uS10"/>
    <property type="match status" value="1"/>
</dbReference>
<dbReference type="InterPro" id="IPR001848">
    <property type="entry name" value="Ribosomal_uS10"/>
</dbReference>
<dbReference type="InterPro" id="IPR018268">
    <property type="entry name" value="Ribosomal_uS10_CS"/>
</dbReference>
<dbReference type="InterPro" id="IPR027486">
    <property type="entry name" value="Ribosomal_uS10_dom"/>
</dbReference>
<dbReference type="InterPro" id="IPR036838">
    <property type="entry name" value="Ribosomal_uS10_dom_sf"/>
</dbReference>
<dbReference type="NCBIfam" id="NF001861">
    <property type="entry name" value="PRK00596.1"/>
    <property type="match status" value="1"/>
</dbReference>
<dbReference type="NCBIfam" id="TIGR01049">
    <property type="entry name" value="rpsJ_bact"/>
    <property type="match status" value="1"/>
</dbReference>
<dbReference type="PANTHER" id="PTHR11700">
    <property type="entry name" value="30S RIBOSOMAL PROTEIN S10 FAMILY MEMBER"/>
    <property type="match status" value="1"/>
</dbReference>
<dbReference type="Pfam" id="PF00338">
    <property type="entry name" value="Ribosomal_S10"/>
    <property type="match status" value="1"/>
</dbReference>
<dbReference type="PRINTS" id="PR00971">
    <property type="entry name" value="RIBOSOMALS10"/>
</dbReference>
<dbReference type="SMART" id="SM01403">
    <property type="entry name" value="Ribosomal_S10"/>
    <property type="match status" value="1"/>
</dbReference>
<dbReference type="SUPFAM" id="SSF54999">
    <property type="entry name" value="Ribosomal protein S10"/>
    <property type="match status" value="1"/>
</dbReference>
<dbReference type="PROSITE" id="PS00361">
    <property type="entry name" value="RIBOSOMAL_S10"/>
    <property type="match status" value="1"/>
</dbReference>